<comment type="function">
    <text evidence="1 2">Component of the signal peptidase complex (SPC) which catalyzes the cleavage of N-terminal signal sequences from nascent proteins as they are translocated into the lumen of the endoplasmic reticulum (By similarity). Enhances the enzymatic activity of SPC and facilitates the interactions between different components of the translocation site (By similarity).</text>
</comment>
<comment type="subunit">
    <text evidence="2">Component of the signal peptidase complex (SPC) composed of a catalytic subunit SEC11 and three accessory subunits SPCS1, SPCS2 and SPCS3. The complex induces a local thinning of the ER membrane which is used to measure the length of the signal peptide (SP) h-region of protein substrates. This ensures the selectivity of the complex towards h-regions shorter than 18-20 amino acids.</text>
</comment>
<comment type="subcellular location">
    <subcellularLocation>
        <location evidence="3">Endoplasmic reticulum membrane</location>
        <topology evidence="3">Multi-pass membrane protein</topology>
    </subcellularLocation>
</comment>
<comment type="similarity">
    <text evidence="5">Belongs to the SPCS2 family.</text>
</comment>
<dbReference type="EMBL" id="AF002109">
    <property type="status" value="NOT_ANNOTATED_CDS"/>
    <property type="molecule type" value="Genomic_DNA"/>
</dbReference>
<dbReference type="EMBL" id="CP002685">
    <property type="protein sequence ID" value="AEC09756.1"/>
    <property type="molecule type" value="Genomic_DNA"/>
</dbReference>
<dbReference type="EMBL" id="AY065212">
    <property type="protein sequence ID" value="AAL38688.1"/>
    <property type="molecule type" value="mRNA"/>
</dbReference>
<dbReference type="EMBL" id="AY096518">
    <property type="protein sequence ID" value="AAM20168.1"/>
    <property type="molecule type" value="mRNA"/>
</dbReference>
<dbReference type="RefSeq" id="NP_181525.2">
    <property type="nucleotide sequence ID" value="NM_129554.4"/>
</dbReference>
<dbReference type="SMR" id="P58684"/>
<dbReference type="BioGRID" id="3921">
    <property type="interactions" value="18"/>
</dbReference>
<dbReference type="FunCoup" id="P58684">
    <property type="interactions" value="4148"/>
</dbReference>
<dbReference type="IntAct" id="P58684">
    <property type="interactions" value="6"/>
</dbReference>
<dbReference type="STRING" id="3702.P58684"/>
<dbReference type="PaxDb" id="3702-AT2G39960.1"/>
<dbReference type="ProteomicsDB" id="232523"/>
<dbReference type="EnsemblPlants" id="AT2G39960.1">
    <property type="protein sequence ID" value="AT2G39960.1"/>
    <property type="gene ID" value="AT2G39960"/>
</dbReference>
<dbReference type="GeneID" id="818583"/>
<dbReference type="Gramene" id="AT2G39960.1">
    <property type="protein sequence ID" value="AT2G39960.1"/>
    <property type="gene ID" value="AT2G39960"/>
</dbReference>
<dbReference type="KEGG" id="ath:AT2G39960"/>
<dbReference type="Araport" id="AT2G39960"/>
<dbReference type="TAIR" id="AT2G39960"/>
<dbReference type="eggNOG" id="ENOG502QVCN">
    <property type="taxonomic scope" value="Eukaryota"/>
</dbReference>
<dbReference type="HOGENOM" id="CLU_100048_0_0_1"/>
<dbReference type="InParanoid" id="P58684"/>
<dbReference type="OMA" id="INKWDGT"/>
<dbReference type="PhylomeDB" id="P58684"/>
<dbReference type="CD-CODE" id="4299E36E">
    <property type="entry name" value="Nucleolus"/>
</dbReference>
<dbReference type="PRO" id="PR:P58684"/>
<dbReference type="Proteomes" id="UP000006548">
    <property type="component" value="Chromosome 2"/>
</dbReference>
<dbReference type="ExpressionAtlas" id="P58684">
    <property type="expression patterns" value="baseline and differential"/>
</dbReference>
<dbReference type="GO" id="GO:0005783">
    <property type="term" value="C:endoplasmic reticulum"/>
    <property type="evidence" value="ECO:0007005"/>
    <property type="project" value="TAIR"/>
</dbReference>
<dbReference type="GO" id="GO:0005787">
    <property type="term" value="C:signal peptidase complex"/>
    <property type="evidence" value="ECO:0007669"/>
    <property type="project" value="InterPro"/>
</dbReference>
<dbReference type="GO" id="GO:0006465">
    <property type="term" value="P:signal peptide processing"/>
    <property type="evidence" value="ECO:0007669"/>
    <property type="project" value="InterPro"/>
</dbReference>
<dbReference type="InterPro" id="IPR009582">
    <property type="entry name" value="Spc2/SPCS2"/>
</dbReference>
<dbReference type="PANTHER" id="PTHR13085">
    <property type="entry name" value="MICROSOMAL SIGNAL PEPTIDASE 25 KDA SUBUNIT"/>
    <property type="match status" value="1"/>
</dbReference>
<dbReference type="PANTHER" id="PTHR13085:SF0">
    <property type="entry name" value="SIGNAL PEPTIDASE COMPLEX SUBUNIT 2"/>
    <property type="match status" value="1"/>
</dbReference>
<dbReference type="Pfam" id="PF06703">
    <property type="entry name" value="SPC25"/>
    <property type="match status" value="1"/>
</dbReference>
<accession>P58684</accession>
<organism>
    <name type="scientific">Arabidopsis thaliana</name>
    <name type="common">Mouse-ear cress</name>
    <dbReference type="NCBI Taxonomy" id="3702"/>
    <lineage>
        <taxon>Eukaryota</taxon>
        <taxon>Viridiplantae</taxon>
        <taxon>Streptophyta</taxon>
        <taxon>Embryophyta</taxon>
        <taxon>Tracheophyta</taxon>
        <taxon>Spermatophyta</taxon>
        <taxon>Magnoliopsida</taxon>
        <taxon>eudicotyledons</taxon>
        <taxon>Gunneridae</taxon>
        <taxon>Pentapetalae</taxon>
        <taxon>rosids</taxon>
        <taxon>malvids</taxon>
        <taxon>Brassicales</taxon>
        <taxon>Brassicaceae</taxon>
        <taxon>Camelineae</taxon>
        <taxon>Arabidopsis</taxon>
    </lineage>
</organism>
<sequence>MEEKKTESTNKNVKKANLLDHHSIKHILDESVSDIVTSRGYKEDVRLSNLKLILGTIIIVVALVAQFYNKKFPENRDFLIGCIALYVVLNAVLQLILYTKEKNAILFTYPPEGSFTSTGLVVSSKLPRFSDQYTLTIDSADPKSISAGKSVQLTKSVTQWFTKDGVLVEGLFWKDVEALIKNYAEEEPKKKK</sequence>
<keyword id="KW-0256">Endoplasmic reticulum</keyword>
<keyword id="KW-0472">Membrane</keyword>
<keyword id="KW-1185">Reference proteome</keyword>
<keyword id="KW-0812">Transmembrane</keyword>
<keyword id="KW-1133">Transmembrane helix</keyword>
<protein>
    <recommendedName>
        <fullName>Signal peptidase complex subunit 2</fullName>
    </recommendedName>
    <alternativeName>
        <fullName>Microsomal signal peptidase 25 kDa subunit</fullName>
        <shortName>SPase 25 kDa subunit</shortName>
    </alternativeName>
</protein>
<evidence type="ECO:0000250" key="1">
    <source>
        <dbReference type="UniProtKB" id="Q04969"/>
    </source>
</evidence>
<evidence type="ECO:0000250" key="2">
    <source>
        <dbReference type="UniProtKB" id="Q15005"/>
    </source>
</evidence>
<evidence type="ECO:0000250" key="3">
    <source>
        <dbReference type="UniProtKB" id="Q28250"/>
    </source>
</evidence>
<evidence type="ECO:0000255" key="4"/>
<evidence type="ECO:0000305" key="5"/>
<gene>
    <name type="ordered locus">At2g39960</name>
    <name type="ORF">T28M21.12</name>
</gene>
<proteinExistence type="evidence at transcript level"/>
<reference key="1">
    <citation type="journal article" date="1999" name="Nature">
        <title>Sequence and analysis of chromosome 2 of the plant Arabidopsis thaliana.</title>
        <authorList>
            <person name="Lin X."/>
            <person name="Kaul S."/>
            <person name="Rounsley S.D."/>
            <person name="Shea T.P."/>
            <person name="Benito M.-I."/>
            <person name="Town C.D."/>
            <person name="Fujii C.Y."/>
            <person name="Mason T.M."/>
            <person name="Bowman C.L."/>
            <person name="Barnstead M.E."/>
            <person name="Feldblyum T.V."/>
            <person name="Buell C.R."/>
            <person name="Ketchum K.A."/>
            <person name="Lee J.J."/>
            <person name="Ronning C.M."/>
            <person name="Koo H.L."/>
            <person name="Moffat K.S."/>
            <person name="Cronin L.A."/>
            <person name="Shen M."/>
            <person name="Pai G."/>
            <person name="Van Aken S."/>
            <person name="Umayam L."/>
            <person name="Tallon L.J."/>
            <person name="Gill J.E."/>
            <person name="Adams M.D."/>
            <person name="Carrera A.J."/>
            <person name="Creasy T.H."/>
            <person name="Goodman H.M."/>
            <person name="Somerville C.R."/>
            <person name="Copenhaver G.P."/>
            <person name="Preuss D."/>
            <person name="Nierman W.C."/>
            <person name="White O."/>
            <person name="Eisen J.A."/>
            <person name="Salzberg S.L."/>
            <person name="Fraser C.M."/>
            <person name="Venter J.C."/>
        </authorList>
    </citation>
    <scope>NUCLEOTIDE SEQUENCE [LARGE SCALE GENOMIC DNA]</scope>
    <source>
        <strain>cv. Columbia</strain>
    </source>
</reference>
<reference key="2">
    <citation type="journal article" date="2017" name="Plant J.">
        <title>Araport11: a complete reannotation of the Arabidopsis thaliana reference genome.</title>
        <authorList>
            <person name="Cheng C.Y."/>
            <person name="Krishnakumar V."/>
            <person name="Chan A.P."/>
            <person name="Thibaud-Nissen F."/>
            <person name="Schobel S."/>
            <person name="Town C.D."/>
        </authorList>
    </citation>
    <scope>GENOME REANNOTATION</scope>
    <source>
        <strain>cv. Columbia</strain>
    </source>
</reference>
<reference key="3">
    <citation type="journal article" date="2003" name="Science">
        <title>Empirical analysis of transcriptional activity in the Arabidopsis genome.</title>
        <authorList>
            <person name="Yamada K."/>
            <person name="Lim J."/>
            <person name="Dale J.M."/>
            <person name="Chen H."/>
            <person name="Shinn P."/>
            <person name="Palm C.J."/>
            <person name="Southwick A.M."/>
            <person name="Wu H.C."/>
            <person name="Kim C.J."/>
            <person name="Nguyen M."/>
            <person name="Pham P.K."/>
            <person name="Cheuk R.F."/>
            <person name="Karlin-Newmann G."/>
            <person name="Liu S.X."/>
            <person name="Lam B."/>
            <person name="Sakano H."/>
            <person name="Wu T."/>
            <person name="Yu G."/>
            <person name="Miranda M."/>
            <person name="Quach H.L."/>
            <person name="Tripp M."/>
            <person name="Chang C.H."/>
            <person name="Lee J.M."/>
            <person name="Toriumi M.J."/>
            <person name="Chan M.M."/>
            <person name="Tang C.C."/>
            <person name="Onodera C.S."/>
            <person name="Deng J.M."/>
            <person name="Akiyama K."/>
            <person name="Ansari Y."/>
            <person name="Arakawa T."/>
            <person name="Banh J."/>
            <person name="Banno F."/>
            <person name="Bowser L."/>
            <person name="Brooks S.Y."/>
            <person name="Carninci P."/>
            <person name="Chao Q."/>
            <person name="Choy N."/>
            <person name="Enju A."/>
            <person name="Goldsmith A.D."/>
            <person name="Gurjal M."/>
            <person name="Hansen N.F."/>
            <person name="Hayashizaki Y."/>
            <person name="Johnson-Hopson C."/>
            <person name="Hsuan V.W."/>
            <person name="Iida K."/>
            <person name="Karnes M."/>
            <person name="Khan S."/>
            <person name="Koesema E."/>
            <person name="Ishida J."/>
            <person name="Jiang P.X."/>
            <person name="Jones T."/>
            <person name="Kawai J."/>
            <person name="Kamiya A."/>
            <person name="Meyers C."/>
            <person name="Nakajima M."/>
            <person name="Narusaka M."/>
            <person name="Seki M."/>
            <person name="Sakurai T."/>
            <person name="Satou M."/>
            <person name="Tamse R."/>
            <person name="Vaysberg M."/>
            <person name="Wallender E.K."/>
            <person name="Wong C."/>
            <person name="Yamamura Y."/>
            <person name="Yuan S."/>
            <person name="Shinozaki K."/>
            <person name="Davis R.W."/>
            <person name="Theologis A."/>
            <person name="Ecker J.R."/>
        </authorList>
    </citation>
    <scope>NUCLEOTIDE SEQUENCE [LARGE SCALE MRNA]</scope>
    <source>
        <strain>cv. Columbia</strain>
    </source>
</reference>
<name>SPCS2_ARATH</name>
<feature type="chain" id="PRO_0000221167" description="Signal peptidase complex subunit 2">
    <location>
        <begin position="1"/>
        <end position="192"/>
    </location>
</feature>
<feature type="topological domain" description="Cytoplasmic" evidence="3">
    <location>
        <begin position="1"/>
        <end position="46"/>
    </location>
</feature>
<feature type="transmembrane region" description="Helical" evidence="4">
    <location>
        <begin position="47"/>
        <end position="69"/>
    </location>
</feature>
<feature type="topological domain" description="Lumenal" evidence="3">
    <location>
        <begin position="70"/>
        <end position="78"/>
    </location>
</feature>
<feature type="transmembrane region" description="Helical" evidence="4">
    <location>
        <begin position="79"/>
        <end position="98"/>
    </location>
</feature>
<feature type="topological domain" description="Cytoplasmic" evidence="3">
    <location>
        <begin position="99"/>
        <end position="192"/>
    </location>
</feature>